<reference key="1">
    <citation type="journal article" date="2008" name="Environ. Microbiol.">
        <title>The genome of Erwinia tasmaniensis strain Et1/99, a non-pathogenic bacterium in the genus Erwinia.</title>
        <authorList>
            <person name="Kube M."/>
            <person name="Migdoll A.M."/>
            <person name="Mueller I."/>
            <person name="Kuhl H."/>
            <person name="Beck A."/>
            <person name="Reinhardt R."/>
            <person name="Geider K."/>
        </authorList>
    </citation>
    <scope>NUCLEOTIDE SEQUENCE [LARGE SCALE GENOMIC DNA]</scope>
    <source>
        <strain>DSM 17950 / CFBP 7177 / CIP 109463 / NCPPB 4357 / Et1/99</strain>
    </source>
</reference>
<feature type="chain" id="PRO_1000099932" description="Pantothenate kinase">
    <location>
        <begin position="1"/>
        <end position="316"/>
    </location>
</feature>
<feature type="binding site" evidence="1">
    <location>
        <begin position="95"/>
        <end position="102"/>
    </location>
    <ligand>
        <name>ATP</name>
        <dbReference type="ChEBI" id="CHEBI:30616"/>
    </ligand>
</feature>
<sequence length="316" mass="36098">MSKKDSLLTTPYLQFNRTQWAALRDSVPMTLSEAEIAQLKGINEDLSIEEVAEIYLPLSRLLNFYISSNLRRQAVLEQFLGTNGQKIPYIISIAGSVAVGKSTTARVLQALLSRWPEHRRVELITTDGFLHPNAVLKERGLMKKKGFPLSYDMHRLVKFVSDLKSGADHVTAPVYSHLIYDVIPDGDKNVQQPDILILEGLNVLQSGMDYPHDPHHVFVSDFVDFSIYVDAPEDLLEHWYINRFLKFRQGAFTDPDSYFHHYAQLPEDEAVGIASQLWHEINYRNLKENILPTRERASLIMTKSSGHAVDLVRLRK</sequence>
<name>COAA_ERWT9</name>
<evidence type="ECO:0000255" key="1">
    <source>
        <dbReference type="HAMAP-Rule" id="MF_00215"/>
    </source>
</evidence>
<protein>
    <recommendedName>
        <fullName evidence="1">Pantothenate kinase</fullName>
        <ecNumber evidence="1">2.7.1.33</ecNumber>
    </recommendedName>
    <alternativeName>
        <fullName evidence="1">Pantothenic acid kinase</fullName>
    </alternativeName>
</protein>
<organism>
    <name type="scientific">Erwinia tasmaniensis (strain DSM 17950 / CFBP 7177 / CIP 109463 / NCPPB 4357 / Et1/99)</name>
    <dbReference type="NCBI Taxonomy" id="465817"/>
    <lineage>
        <taxon>Bacteria</taxon>
        <taxon>Pseudomonadati</taxon>
        <taxon>Pseudomonadota</taxon>
        <taxon>Gammaproteobacteria</taxon>
        <taxon>Enterobacterales</taxon>
        <taxon>Erwiniaceae</taxon>
        <taxon>Erwinia</taxon>
    </lineage>
</organism>
<comment type="catalytic activity">
    <reaction evidence="1">
        <text>(R)-pantothenate + ATP = (R)-4'-phosphopantothenate + ADP + H(+)</text>
        <dbReference type="Rhea" id="RHEA:16373"/>
        <dbReference type="ChEBI" id="CHEBI:10986"/>
        <dbReference type="ChEBI" id="CHEBI:15378"/>
        <dbReference type="ChEBI" id="CHEBI:29032"/>
        <dbReference type="ChEBI" id="CHEBI:30616"/>
        <dbReference type="ChEBI" id="CHEBI:456216"/>
        <dbReference type="EC" id="2.7.1.33"/>
    </reaction>
</comment>
<comment type="pathway">
    <text evidence="1">Cofactor biosynthesis; coenzyme A biosynthesis; CoA from (R)-pantothenate: step 1/5.</text>
</comment>
<comment type="subcellular location">
    <subcellularLocation>
        <location evidence="1">Cytoplasm</location>
    </subcellularLocation>
</comment>
<comment type="similarity">
    <text evidence="1">Belongs to the prokaryotic pantothenate kinase family.</text>
</comment>
<gene>
    <name evidence="1" type="primary">coaA</name>
    <name type="ordered locus">ETA_01470</name>
</gene>
<dbReference type="EC" id="2.7.1.33" evidence="1"/>
<dbReference type="EMBL" id="CU468135">
    <property type="protein sequence ID" value="CAO95193.1"/>
    <property type="molecule type" value="Genomic_DNA"/>
</dbReference>
<dbReference type="RefSeq" id="WP_012439917.1">
    <property type="nucleotide sequence ID" value="NC_010694.1"/>
</dbReference>
<dbReference type="SMR" id="B2VG89"/>
<dbReference type="STRING" id="465817.ETA_01470"/>
<dbReference type="KEGG" id="eta:ETA_01470"/>
<dbReference type="eggNOG" id="COG1072">
    <property type="taxonomic scope" value="Bacteria"/>
</dbReference>
<dbReference type="HOGENOM" id="CLU_053818_1_1_6"/>
<dbReference type="OrthoDB" id="1550976at2"/>
<dbReference type="UniPathway" id="UPA00241">
    <property type="reaction ID" value="UER00352"/>
</dbReference>
<dbReference type="Proteomes" id="UP000001726">
    <property type="component" value="Chromosome"/>
</dbReference>
<dbReference type="GO" id="GO:0005737">
    <property type="term" value="C:cytoplasm"/>
    <property type="evidence" value="ECO:0007669"/>
    <property type="project" value="UniProtKB-SubCell"/>
</dbReference>
<dbReference type="GO" id="GO:0005524">
    <property type="term" value="F:ATP binding"/>
    <property type="evidence" value="ECO:0007669"/>
    <property type="project" value="UniProtKB-UniRule"/>
</dbReference>
<dbReference type="GO" id="GO:0004594">
    <property type="term" value="F:pantothenate kinase activity"/>
    <property type="evidence" value="ECO:0007669"/>
    <property type="project" value="UniProtKB-UniRule"/>
</dbReference>
<dbReference type="GO" id="GO:0015937">
    <property type="term" value="P:coenzyme A biosynthetic process"/>
    <property type="evidence" value="ECO:0007669"/>
    <property type="project" value="UniProtKB-UniRule"/>
</dbReference>
<dbReference type="CDD" id="cd02025">
    <property type="entry name" value="PanK"/>
    <property type="match status" value="1"/>
</dbReference>
<dbReference type="FunFam" id="3.40.50.300:FF:000242">
    <property type="entry name" value="Pantothenate kinase"/>
    <property type="match status" value="1"/>
</dbReference>
<dbReference type="Gene3D" id="3.40.50.300">
    <property type="entry name" value="P-loop containing nucleotide triphosphate hydrolases"/>
    <property type="match status" value="1"/>
</dbReference>
<dbReference type="HAMAP" id="MF_00215">
    <property type="entry name" value="Pantothen_kinase_1"/>
    <property type="match status" value="1"/>
</dbReference>
<dbReference type="InterPro" id="IPR027417">
    <property type="entry name" value="P-loop_NTPase"/>
</dbReference>
<dbReference type="InterPro" id="IPR004566">
    <property type="entry name" value="PanK"/>
</dbReference>
<dbReference type="InterPro" id="IPR006083">
    <property type="entry name" value="PRK/URK"/>
</dbReference>
<dbReference type="NCBIfam" id="TIGR00554">
    <property type="entry name" value="panK_bact"/>
    <property type="match status" value="1"/>
</dbReference>
<dbReference type="PANTHER" id="PTHR10285">
    <property type="entry name" value="URIDINE KINASE"/>
    <property type="match status" value="1"/>
</dbReference>
<dbReference type="Pfam" id="PF00485">
    <property type="entry name" value="PRK"/>
    <property type="match status" value="1"/>
</dbReference>
<dbReference type="PIRSF" id="PIRSF000545">
    <property type="entry name" value="Pantothenate_kin"/>
    <property type="match status" value="1"/>
</dbReference>
<dbReference type="SUPFAM" id="SSF52540">
    <property type="entry name" value="P-loop containing nucleoside triphosphate hydrolases"/>
    <property type="match status" value="1"/>
</dbReference>
<accession>B2VG89</accession>
<proteinExistence type="inferred from homology"/>
<keyword id="KW-0067">ATP-binding</keyword>
<keyword id="KW-0173">Coenzyme A biosynthesis</keyword>
<keyword id="KW-0963">Cytoplasm</keyword>
<keyword id="KW-0418">Kinase</keyword>
<keyword id="KW-0547">Nucleotide-binding</keyword>
<keyword id="KW-1185">Reference proteome</keyword>
<keyword id="KW-0808">Transferase</keyword>